<gene>
    <name type="primary">TUBA1C</name>
    <name type="synonym">TUBA6</name>
</gene>
<evidence type="ECO:0000250" key="1">
    <source>
        <dbReference type="UniProtKB" id="P07437"/>
    </source>
</evidence>
<evidence type="ECO:0000250" key="2">
    <source>
        <dbReference type="UniProtKB" id="P68363"/>
    </source>
</evidence>
<evidence type="ECO:0000250" key="3">
    <source>
        <dbReference type="UniProtKB" id="P68369"/>
    </source>
</evidence>
<evidence type="ECO:0000250" key="4">
    <source>
        <dbReference type="UniProtKB" id="P68373"/>
    </source>
</evidence>
<evidence type="ECO:0000250" key="5">
    <source>
        <dbReference type="UniProtKB" id="P99024"/>
    </source>
</evidence>
<evidence type="ECO:0000250" key="6">
    <source>
        <dbReference type="UniProtKB" id="Q71U36"/>
    </source>
</evidence>
<evidence type="ECO:0000256" key="7">
    <source>
        <dbReference type="SAM" id="MobiDB-lite"/>
    </source>
</evidence>
<evidence type="ECO:0000269" key="8">
    <source>
    </source>
</evidence>
<evidence type="ECO:0000269" key="9">
    <source>
    </source>
</evidence>
<evidence type="ECO:0000269" key="10">
    <source>
    </source>
</evidence>
<evidence type="ECO:0000269" key="11">
    <source>
    </source>
</evidence>
<evidence type="ECO:0000269" key="12">
    <source>
    </source>
</evidence>
<evidence type="ECO:0000269" key="13">
    <source>
    </source>
</evidence>
<evidence type="ECO:0000305" key="14"/>
<evidence type="ECO:0000305" key="15">
    <source>
    </source>
</evidence>
<evidence type="ECO:0000305" key="16">
    <source>
    </source>
</evidence>
<evidence type="ECO:0000305" key="17">
    <source>
    </source>
</evidence>
<evidence type="ECO:0007744" key="18">
    <source>
    </source>
</evidence>
<evidence type="ECO:0007744" key="19">
    <source>
    </source>
</evidence>
<evidence type="ECO:0007744" key="20">
    <source>
    </source>
</evidence>
<evidence type="ECO:0007744" key="21">
    <source>
    </source>
</evidence>
<evidence type="ECO:0007744" key="22">
    <source>
    </source>
</evidence>
<evidence type="ECO:0007744" key="23">
    <source>
    </source>
</evidence>
<comment type="function">
    <text>Tubulin is the major constituent of microtubules, a cylinder consisting of laterally associated linear protofilaments composed of alpha- and beta-tubulin heterodimers. Microtubules grow by the addition of GTP-tubulin dimers to the microtubule end, where a stabilizing cap forms. Below the cap, tubulin dimers are in GDP-bound state, owing to GTPase activity of alpha-tubulin.</text>
</comment>
<comment type="catalytic activity">
    <reaction evidence="2">
        <text>GTP + H2O = GDP + phosphate + H(+)</text>
        <dbReference type="Rhea" id="RHEA:19669"/>
        <dbReference type="ChEBI" id="CHEBI:15377"/>
        <dbReference type="ChEBI" id="CHEBI:15378"/>
        <dbReference type="ChEBI" id="CHEBI:37565"/>
        <dbReference type="ChEBI" id="CHEBI:43474"/>
        <dbReference type="ChEBI" id="CHEBI:58189"/>
    </reaction>
    <physiologicalReaction direction="left-to-right" evidence="2">
        <dbReference type="Rhea" id="RHEA:19670"/>
    </physiologicalReaction>
</comment>
<comment type="cofactor">
    <cofactor evidence="2">
        <name>Mg(2+)</name>
        <dbReference type="ChEBI" id="CHEBI:18420"/>
    </cofactor>
</comment>
<comment type="subunit">
    <text>Dimer of alpha and beta chains. A typical microtubule is a hollow water-filled tube with an outer diameter of 25 nm and an inner diameter of 15 nM. Alpha-beta heterodimers associate head-to-tail to form protofilaments running lengthwise along the microtubule wall with the beta-tubulin subunit facing the microtubule plus end conferring a structural polarity. Microtubules usually have 13 protofilaments but different protofilament numbers can be found in some organisms and specialized cells.</text>
</comment>
<comment type="interaction">
    <interactant intactId="EBI-1103245">
        <id>Q9BQE3</id>
    </interactant>
    <interactant intactId="EBI-21591415">
        <id>P13473-2</id>
        <label>LAMP2</label>
    </interactant>
    <organismsDiffer>false</organismsDiffer>
    <experiments>3</experiments>
</comment>
<comment type="interaction">
    <interactant intactId="EBI-1103245">
        <id>Q9BQE3</id>
    </interactant>
    <interactant intactId="EBI-5280197">
        <id>O75400-2</id>
        <label>PRPF40A</label>
    </interactant>
    <organismsDiffer>false</organismsDiffer>
    <experiments>3</experiments>
</comment>
<comment type="interaction">
    <interactant intactId="EBI-1103245">
        <id>Q9BQE3</id>
    </interactant>
    <interactant intactId="EBI-2623095">
        <id>Q9Y371</id>
        <label>SH3GLB1</label>
    </interactant>
    <organismsDiffer>false</organismsDiffer>
    <experiments>3</experiments>
</comment>
<comment type="interaction">
    <interactant intactId="EBI-1103245">
        <id>Q9BQE3</id>
    </interactant>
    <interactant intactId="EBI-1783169">
        <id>P13693</id>
        <label>TPT1</label>
    </interactant>
    <organismsDiffer>false</organismsDiffer>
    <experiments>4</experiments>
</comment>
<comment type="interaction">
    <interactant intactId="EBI-1103245">
        <id>Q9BQE3</id>
    </interactant>
    <interactant intactId="EBI-353844">
        <id>P08670</id>
        <label>VIM</label>
    </interactant>
    <organismsDiffer>false</organismsDiffer>
    <experiments>3</experiments>
</comment>
<comment type="subcellular location">
    <subcellularLocation>
        <location>Cytoplasm</location>
        <location>Cytoskeleton</location>
    </subcellularLocation>
</comment>
<comment type="domain">
    <text evidence="2">The MREC motif may be critical for tubulin autoregulation.</text>
</comment>
<comment type="PTM">
    <text evidence="5 10">Some glutamate residues at the C-terminus are polyglutamylated, resulting in polyglutamate chains on the gamma-carboxyl group (PubMed:26875866). Polyglutamylation plays a key role in microtubule severing by spastin (SPAST). SPAST preferentially recognizes and acts on microtubules decorated with short polyglutamate tails: severing activity by SPAST increases as the number of glutamates per tubulin rises from one to eight, but decreases beyond this glutamylation threshold (PubMed:26875866). Glutamylation is also involved in cilia motility (By similarity).</text>
</comment>
<comment type="PTM">
    <text evidence="1 15">Some glutamate residues at the C-terminus are monoglycylated but not polyglycylated due to the absence of functional TTLL10 in human. Monoglycylation is mainly limited to tubulin incorporated into cilia and flagella axonemes, which is required for their stability and maintenance. Flagella glycylation controls sperm motility. Both polyglutamylation and monoglycylation can coexist on the same protein on adjacent residues, and lowering glycylation levels increases polyglutamylation, and reciprocally.</text>
</comment>
<comment type="PTM">
    <text evidence="8">Acetylation of alpha chains at Lys-40 is located inside the microtubule lumen. This modification has been correlated with increased microtubule stability, intracellular transport and ciliary assembly.</text>
</comment>
<comment type="PTM">
    <text evidence="2">Methylation of alpha chains at Lys-40 is found in mitotic microtubules and is required for normal mitosis and cytokinesis contributing to genomic stability.</text>
</comment>
<comment type="PTM">
    <text evidence="6">Nitration of Tyr-449 is irreversible and interferes with normal dynein intracellular distribution.</text>
</comment>
<comment type="PTM">
    <text evidence="9 11 12 13">Undergoes a tyrosination/detyrosination cycle, the cyclic removal and re-addition of a C-terminal tyrosine residue by the enzymes tubulin tyrosine carboxypeptidase (MATCAP1/KIAA0895L, VASH1 or VASH2) and tubulin tyrosine ligase (TTL), respectively.</text>
</comment>
<comment type="PTM">
    <molecule>Tubulin alpha-1C chain</molecule>
    <text evidence="3 6 11">Tyrosination promotes microtubule interaction with CAP-Gly domain-containing proteins such as CLIP1, CLIP2 and DCTN1 (By similarity). Tyrosination regulates the initiation of dynein-dynactin motility via interaction with DCTN1, which brings the dynein-dynactin complex into contact with microtubules (PubMed:26972003). In neurons, tyrosinated tubulins mediate the initiation of retrograde vesicle transport (By similarity).</text>
</comment>
<comment type="PTM">
    <molecule>Detyrosinated tubulin alpha-1C chain</molecule>
    <text evidence="4 9">Detyrosination is involved in metaphase plate congression by guiding chromosomes during mitosis: detyrosination promotes interaction with CENPE, promoting pole-proximal transport of chromosomes toward the equator (PubMed:25908662). Detyrosination increases microtubules-dependent mechanotransduction in dystrophic cardiac and skeletal muscle. In cardiomyocytes, detyrosinated microtubules are required to resist to contractile compression during contraction: detyrosination promotes association with desmin (DES) at force-generating sarcomeres, leading to buckled microtubules and mechanical resistance to contraction (By similarity).</text>
</comment>
<comment type="similarity">
    <text evidence="14">Belongs to the tubulin family.</text>
</comment>
<dbReference type="EC" id="3.6.5.-" evidence="2"/>
<dbReference type="EMBL" id="BC004949">
    <property type="protein sequence ID" value="AAH04949.1"/>
    <property type="molecule type" value="mRNA"/>
</dbReference>
<dbReference type="EMBL" id="BC005946">
    <property type="protein sequence ID" value="AAH05946.1"/>
    <property type="molecule type" value="mRNA"/>
</dbReference>
<dbReference type="EMBL" id="BC011790">
    <property type="protein sequence ID" value="AAH11790.1"/>
    <property type="molecule type" value="mRNA"/>
</dbReference>
<dbReference type="EMBL" id="BC019298">
    <property type="protein sequence ID" value="AAH19298.1"/>
    <property type="molecule type" value="mRNA"/>
</dbReference>
<dbReference type="EMBL" id="BC021088">
    <property type="protein sequence ID" value="AAH21088.1"/>
    <property type="molecule type" value="mRNA"/>
</dbReference>
<dbReference type="EMBL" id="BC051297">
    <property type="protein sequence ID" value="AAH51297.1"/>
    <property type="molecule type" value="mRNA"/>
</dbReference>
<dbReference type="EMBL" id="BC063036">
    <property type="protein sequence ID" value="AAH63036.1"/>
    <property type="molecule type" value="mRNA"/>
</dbReference>
<dbReference type="CCDS" id="CCDS8782.1"/>
<dbReference type="RefSeq" id="NP_116093.1">
    <property type="nucleotide sequence ID" value="NM_032704.5"/>
</dbReference>
<dbReference type="SMR" id="Q9BQE3"/>
<dbReference type="BioGRID" id="124259">
    <property type="interactions" value="518"/>
</dbReference>
<dbReference type="CORUM" id="Q9BQE3"/>
<dbReference type="FunCoup" id="Q9BQE3">
    <property type="interactions" value="2190"/>
</dbReference>
<dbReference type="IntAct" id="Q9BQE3">
    <property type="interactions" value="336"/>
</dbReference>
<dbReference type="MINT" id="Q9BQE3"/>
<dbReference type="STRING" id="9606.ENSP00000443475"/>
<dbReference type="BindingDB" id="Q9BQE3"/>
<dbReference type="ChEMBL" id="CHEMBL3797011"/>
<dbReference type="DrugBank" id="DB07574">
    <property type="generic name" value="2-MERCAPTO-N-[1,2,3,10-TETRAMETHOXY-9-OXO-5,6,7,9-TETRAHYDRO-BENZO[A]HEPTALEN-7-YL]ACETAMIDE"/>
</dbReference>
<dbReference type="DrugBank" id="DB05147">
    <property type="generic name" value="CYT997"/>
</dbReference>
<dbReference type="DrugBank" id="DB01873">
    <property type="generic name" value="Epothilone D"/>
</dbReference>
<dbReference type="DrugBank" id="DB03010">
    <property type="generic name" value="Patupilone"/>
</dbReference>
<dbReference type="DrugCentral" id="Q9BQE3"/>
<dbReference type="GlyCosmos" id="Q9BQE3">
    <property type="glycosylation" value="18 sites, 1 glycan"/>
</dbReference>
<dbReference type="GlyGen" id="Q9BQE3">
    <property type="glycosylation" value="18 sites, 1 O-linked glycan (18 sites)"/>
</dbReference>
<dbReference type="iPTMnet" id="Q9BQE3"/>
<dbReference type="MetOSite" id="Q9BQE3"/>
<dbReference type="PhosphoSitePlus" id="Q9BQE3"/>
<dbReference type="SwissPalm" id="Q9BQE3"/>
<dbReference type="BioMuta" id="TUBA1C"/>
<dbReference type="DMDM" id="20455322"/>
<dbReference type="REPRODUCTION-2DPAGE" id="Q9BQE3"/>
<dbReference type="jPOST" id="Q9BQE3"/>
<dbReference type="MassIVE" id="Q9BQE3"/>
<dbReference type="PaxDb" id="9606-ENSP00000301072"/>
<dbReference type="PeptideAtlas" id="Q9BQE3"/>
<dbReference type="PRIDE" id="Q9BQE3"/>
<dbReference type="ProteomicsDB" id="78661"/>
<dbReference type="Pumba" id="Q9BQE3"/>
<dbReference type="TopDownProteomics" id="Q9BQE3"/>
<dbReference type="Antibodypedia" id="25908">
    <property type="antibodies" value="386 antibodies from 27 providers"/>
</dbReference>
<dbReference type="DNASU" id="84790"/>
<dbReference type="Ensembl" id="ENST00000301072.11">
    <property type="protein sequence ID" value="ENSP00000301072.7"/>
    <property type="gene ID" value="ENSG00000167553.17"/>
</dbReference>
<dbReference type="GeneID" id="84790"/>
<dbReference type="KEGG" id="hsa:84790"/>
<dbReference type="MANE-Select" id="ENST00000301072.11">
    <property type="protein sequence ID" value="ENSP00000301072.7"/>
    <property type="RefSeq nucleotide sequence ID" value="NM_032704.5"/>
    <property type="RefSeq protein sequence ID" value="NP_116093.1"/>
</dbReference>
<dbReference type="UCSC" id="uc001rtt.2">
    <property type="organism name" value="human"/>
</dbReference>
<dbReference type="AGR" id="HGNC:20768"/>
<dbReference type="CTD" id="84790"/>
<dbReference type="DisGeNET" id="84790"/>
<dbReference type="GeneCards" id="TUBA1C"/>
<dbReference type="HGNC" id="HGNC:20768">
    <property type="gene designation" value="TUBA1C"/>
</dbReference>
<dbReference type="HPA" id="ENSG00000167553">
    <property type="expression patterns" value="Tissue enhanced (esophagus)"/>
</dbReference>
<dbReference type="neXtProt" id="NX_Q9BQE3"/>
<dbReference type="OpenTargets" id="ENSG00000167553"/>
<dbReference type="PharmGKB" id="PA162407345"/>
<dbReference type="VEuPathDB" id="HostDB:ENSG00000167553"/>
<dbReference type="eggNOG" id="KOG1376">
    <property type="taxonomic scope" value="Eukaryota"/>
</dbReference>
<dbReference type="GeneTree" id="ENSGT00950000182825"/>
<dbReference type="HOGENOM" id="CLU_015718_0_0_1"/>
<dbReference type="InParanoid" id="Q9BQE3"/>
<dbReference type="OMA" id="PEGTHIN"/>
<dbReference type="OrthoDB" id="9540336at2759"/>
<dbReference type="PAN-GO" id="Q9BQE3">
    <property type="GO annotations" value="6 GO annotations based on evolutionary models"/>
</dbReference>
<dbReference type="PhylomeDB" id="Q9BQE3"/>
<dbReference type="TreeFam" id="TF300314"/>
<dbReference type="PathwayCommons" id="Q9BQE3"/>
<dbReference type="Reactome" id="R-HSA-1445148">
    <property type="pathway name" value="Translocation of SLC2A4 (GLUT4) to the plasma membrane"/>
</dbReference>
<dbReference type="Reactome" id="R-HSA-190840">
    <property type="pathway name" value="Microtubule-dependent trafficking of connexons from Golgi to the plasma membrane"/>
</dbReference>
<dbReference type="Reactome" id="R-HSA-190861">
    <property type="pathway name" value="Gap junction assembly"/>
</dbReference>
<dbReference type="Reactome" id="R-HSA-2132295">
    <property type="pathway name" value="MHC class II antigen presentation"/>
</dbReference>
<dbReference type="Reactome" id="R-HSA-2467813">
    <property type="pathway name" value="Separation of Sister Chromatids"/>
</dbReference>
<dbReference type="Reactome" id="R-HSA-2500257">
    <property type="pathway name" value="Resolution of Sister Chromatid Cohesion"/>
</dbReference>
<dbReference type="Reactome" id="R-HSA-3371497">
    <property type="pathway name" value="HSP90 chaperone cycle for steroid hormone receptors (SHR) in the presence of ligand"/>
</dbReference>
<dbReference type="Reactome" id="R-HSA-380320">
    <property type="pathway name" value="Recruitment of NuMA to mitotic centrosomes"/>
</dbReference>
<dbReference type="Reactome" id="R-HSA-389957">
    <property type="pathway name" value="Prefoldin mediated transfer of substrate to CCT/TriC"/>
</dbReference>
<dbReference type="Reactome" id="R-HSA-389960">
    <property type="pathway name" value="Formation of tubulin folding intermediates by CCT/TriC"/>
</dbReference>
<dbReference type="Reactome" id="R-HSA-389977">
    <property type="pathway name" value="Post-chaperonin tubulin folding pathway"/>
</dbReference>
<dbReference type="Reactome" id="R-HSA-437239">
    <property type="pathway name" value="Recycling pathway of L1"/>
</dbReference>
<dbReference type="Reactome" id="R-HSA-5610787">
    <property type="pathway name" value="Hedgehog 'off' state"/>
</dbReference>
<dbReference type="Reactome" id="R-HSA-5617833">
    <property type="pathway name" value="Cilium Assembly"/>
</dbReference>
<dbReference type="Reactome" id="R-HSA-5620924">
    <property type="pathway name" value="Intraflagellar transport"/>
</dbReference>
<dbReference type="Reactome" id="R-HSA-5626467">
    <property type="pathway name" value="RHO GTPases activate IQGAPs"/>
</dbReference>
<dbReference type="Reactome" id="R-HSA-5663220">
    <property type="pathway name" value="RHO GTPases Activate Formins"/>
</dbReference>
<dbReference type="Reactome" id="R-HSA-6807878">
    <property type="pathway name" value="COPI-mediated anterograde transport"/>
</dbReference>
<dbReference type="Reactome" id="R-HSA-6811434">
    <property type="pathway name" value="COPI-dependent Golgi-to-ER retrograde traffic"/>
</dbReference>
<dbReference type="Reactome" id="R-HSA-6811436">
    <property type="pathway name" value="COPI-independent Golgi-to-ER retrograde traffic"/>
</dbReference>
<dbReference type="Reactome" id="R-HSA-68877">
    <property type="pathway name" value="Mitotic Prometaphase"/>
</dbReference>
<dbReference type="Reactome" id="R-HSA-8852276">
    <property type="pathway name" value="The role of GTSE1 in G2/M progression after G2 checkpoint"/>
</dbReference>
<dbReference type="Reactome" id="R-HSA-8955332">
    <property type="pathway name" value="Carboxyterminal post-translational modifications of tubulin"/>
</dbReference>
<dbReference type="Reactome" id="R-HSA-9609690">
    <property type="pathway name" value="HCMV Early Events"/>
</dbReference>
<dbReference type="Reactome" id="R-HSA-9609736">
    <property type="pathway name" value="Assembly and cell surface presentation of NMDA receptors"/>
</dbReference>
<dbReference type="Reactome" id="R-HSA-9619483">
    <property type="pathway name" value="Activation of AMPK downstream of NMDARs"/>
</dbReference>
<dbReference type="Reactome" id="R-HSA-9646399">
    <property type="pathway name" value="Aggrephagy"/>
</dbReference>
<dbReference type="Reactome" id="R-HSA-9648025">
    <property type="pathway name" value="EML4 and NUDC in mitotic spindle formation"/>
</dbReference>
<dbReference type="Reactome" id="R-HSA-9668328">
    <property type="pathway name" value="Sealing of the nuclear envelope (NE) by ESCRT-III"/>
</dbReference>
<dbReference type="Reactome" id="R-HSA-983189">
    <property type="pathway name" value="Kinesins"/>
</dbReference>
<dbReference type="Reactome" id="R-HSA-9833482">
    <property type="pathway name" value="PKR-mediated signaling"/>
</dbReference>
<dbReference type="SignaLink" id="Q9BQE3"/>
<dbReference type="SIGNOR" id="Q9BQE3"/>
<dbReference type="BioGRID-ORCS" id="84790">
    <property type="hits" value="699 hits in 1097 CRISPR screens"/>
</dbReference>
<dbReference type="CD-CODE" id="91857CE7">
    <property type="entry name" value="Nucleolus"/>
</dbReference>
<dbReference type="CD-CODE" id="DEE660B4">
    <property type="entry name" value="Stress granule"/>
</dbReference>
<dbReference type="ChiTaRS" id="TUBA1C">
    <property type="organism name" value="human"/>
</dbReference>
<dbReference type="GeneWiki" id="TUBA1C"/>
<dbReference type="GenomeRNAi" id="84790"/>
<dbReference type="Pharos" id="Q9BQE3">
    <property type="development level" value="Tchem"/>
</dbReference>
<dbReference type="PRO" id="PR:Q9BQE3"/>
<dbReference type="Proteomes" id="UP000005640">
    <property type="component" value="Chromosome 12"/>
</dbReference>
<dbReference type="RNAct" id="Q9BQE3">
    <property type="molecule type" value="protein"/>
</dbReference>
<dbReference type="Bgee" id="ENSG00000167553">
    <property type="expression patterns" value="Expressed in secondary oocyte and 204 other cell types or tissues"/>
</dbReference>
<dbReference type="ExpressionAtlas" id="Q9BQE3">
    <property type="expression patterns" value="baseline and differential"/>
</dbReference>
<dbReference type="GO" id="GO:0005929">
    <property type="term" value="C:cilium"/>
    <property type="evidence" value="ECO:0000314"/>
    <property type="project" value="HPA"/>
</dbReference>
<dbReference type="GO" id="GO:0005737">
    <property type="term" value="C:cytoplasm"/>
    <property type="evidence" value="ECO:0000318"/>
    <property type="project" value="GO_Central"/>
</dbReference>
<dbReference type="GO" id="GO:0005881">
    <property type="term" value="C:cytoplasmic microtubule"/>
    <property type="evidence" value="ECO:0007669"/>
    <property type="project" value="Ensembl"/>
</dbReference>
<dbReference type="GO" id="GO:0005874">
    <property type="term" value="C:microtubule"/>
    <property type="evidence" value="ECO:0000318"/>
    <property type="project" value="GO_Central"/>
</dbReference>
<dbReference type="GO" id="GO:0015630">
    <property type="term" value="C:microtubule cytoskeleton"/>
    <property type="evidence" value="ECO:0000314"/>
    <property type="project" value="HPA"/>
</dbReference>
<dbReference type="GO" id="GO:0005634">
    <property type="term" value="C:nucleus"/>
    <property type="evidence" value="ECO:0000314"/>
    <property type="project" value="UniProtKB"/>
</dbReference>
<dbReference type="GO" id="GO:0031982">
    <property type="term" value="C:vesicle"/>
    <property type="evidence" value="ECO:0007005"/>
    <property type="project" value="UniProtKB"/>
</dbReference>
<dbReference type="GO" id="GO:0005525">
    <property type="term" value="F:GTP binding"/>
    <property type="evidence" value="ECO:0000318"/>
    <property type="project" value="GO_Central"/>
</dbReference>
<dbReference type="GO" id="GO:0016787">
    <property type="term" value="F:hydrolase activity"/>
    <property type="evidence" value="ECO:0007669"/>
    <property type="project" value="UniProtKB-KW"/>
</dbReference>
<dbReference type="GO" id="GO:0046872">
    <property type="term" value="F:metal ion binding"/>
    <property type="evidence" value="ECO:0007669"/>
    <property type="project" value="UniProtKB-KW"/>
</dbReference>
<dbReference type="GO" id="GO:0005200">
    <property type="term" value="F:structural constituent of cytoskeleton"/>
    <property type="evidence" value="ECO:0000318"/>
    <property type="project" value="GO_Central"/>
</dbReference>
<dbReference type="GO" id="GO:0005198">
    <property type="term" value="F:structural molecule activity"/>
    <property type="evidence" value="ECO:0000304"/>
    <property type="project" value="BHF-UCL"/>
</dbReference>
<dbReference type="GO" id="GO:0051301">
    <property type="term" value="P:cell division"/>
    <property type="evidence" value="ECO:0000304"/>
    <property type="project" value="BHF-UCL"/>
</dbReference>
<dbReference type="GO" id="GO:0030705">
    <property type="term" value="P:cytoskeleton-dependent intracellular transport"/>
    <property type="evidence" value="ECO:0000304"/>
    <property type="project" value="BHF-UCL"/>
</dbReference>
<dbReference type="GO" id="GO:0000226">
    <property type="term" value="P:microtubule cytoskeleton organization"/>
    <property type="evidence" value="ECO:0000318"/>
    <property type="project" value="GO_Central"/>
</dbReference>
<dbReference type="GO" id="GO:0007017">
    <property type="term" value="P:microtubule-based process"/>
    <property type="evidence" value="ECO:0000304"/>
    <property type="project" value="BHF-UCL"/>
</dbReference>
<dbReference type="GO" id="GO:0000278">
    <property type="term" value="P:mitotic cell cycle"/>
    <property type="evidence" value="ECO:0000318"/>
    <property type="project" value="GO_Central"/>
</dbReference>
<dbReference type="CDD" id="cd02186">
    <property type="entry name" value="alpha_tubulin"/>
    <property type="match status" value="1"/>
</dbReference>
<dbReference type="FunFam" id="1.10.287.600:FF:000005">
    <property type="entry name" value="Tubulin alpha chain"/>
    <property type="match status" value="1"/>
</dbReference>
<dbReference type="FunFam" id="3.30.1330.20:FF:000001">
    <property type="entry name" value="Tubulin alpha chain"/>
    <property type="match status" value="1"/>
</dbReference>
<dbReference type="FunFam" id="3.40.50.1440:FF:000002">
    <property type="entry name" value="Tubulin alpha chain"/>
    <property type="match status" value="1"/>
</dbReference>
<dbReference type="Gene3D" id="1.10.287.600">
    <property type="entry name" value="Helix hairpin bin"/>
    <property type="match status" value="1"/>
</dbReference>
<dbReference type="Gene3D" id="3.30.1330.20">
    <property type="entry name" value="Tubulin/FtsZ, C-terminal domain"/>
    <property type="match status" value="1"/>
</dbReference>
<dbReference type="Gene3D" id="3.40.50.1440">
    <property type="entry name" value="Tubulin/FtsZ, GTPase domain"/>
    <property type="match status" value="1"/>
</dbReference>
<dbReference type="InterPro" id="IPR002452">
    <property type="entry name" value="Alpha_tubulin"/>
</dbReference>
<dbReference type="InterPro" id="IPR008280">
    <property type="entry name" value="Tub_FtsZ_C"/>
</dbReference>
<dbReference type="InterPro" id="IPR000217">
    <property type="entry name" value="Tubulin"/>
</dbReference>
<dbReference type="InterPro" id="IPR037103">
    <property type="entry name" value="Tubulin/FtsZ-like_C"/>
</dbReference>
<dbReference type="InterPro" id="IPR018316">
    <property type="entry name" value="Tubulin/FtsZ_2-layer-sand-dom"/>
</dbReference>
<dbReference type="InterPro" id="IPR036525">
    <property type="entry name" value="Tubulin/FtsZ_GTPase_sf"/>
</dbReference>
<dbReference type="InterPro" id="IPR023123">
    <property type="entry name" value="Tubulin_C"/>
</dbReference>
<dbReference type="InterPro" id="IPR017975">
    <property type="entry name" value="Tubulin_CS"/>
</dbReference>
<dbReference type="InterPro" id="IPR003008">
    <property type="entry name" value="Tubulin_FtsZ_GTPase"/>
</dbReference>
<dbReference type="PANTHER" id="PTHR11588">
    <property type="entry name" value="TUBULIN"/>
    <property type="match status" value="1"/>
</dbReference>
<dbReference type="Pfam" id="PF00091">
    <property type="entry name" value="Tubulin"/>
    <property type="match status" value="1"/>
</dbReference>
<dbReference type="Pfam" id="PF03953">
    <property type="entry name" value="Tubulin_C"/>
    <property type="match status" value="1"/>
</dbReference>
<dbReference type="PRINTS" id="PR01162">
    <property type="entry name" value="ALPHATUBULIN"/>
</dbReference>
<dbReference type="PRINTS" id="PR01161">
    <property type="entry name" value="TUBULIN"/>
</dbReference>
<dbReference type="SMART" id="SM00864">
    <property type="entry name" value="Tubulin"/>
    <property type="match status" value="1"/>
</dbReference>
<dbReference type="SMART" id="SM00865">
    <property type="entry name" value="Tubulin_C"/>
    <property type="match status" value="1"/>
</dbReference>
<dbReference type="SUPFAM" id="SSF55307">
    <property type="entry name" value="Tubulin C-terminal domain-like"/>
    <property type="match status" value="1"/>
</dbReference>
<dbReference type="SUPFAM" id="SSF52490">
    <property type="entry name" value="Tubulin nucleotide-binding domain-like"/>
    <property type="match status" value="1"/>
</dbReference>
<dbReference type="PROSITE" id="PS00227">
    <property type="entry name" value="TUBULIN"/>
    <property type="match status" value="1"/>
</dbReference>
<accession>Q9BQE3</accession>
<name>TBA1C_HUMAN</name>
<organism>
    <name type="scientific">Homo sapiens</name>
    <name type="common">Human</name>
    <dbReference type="NCBI Taxonomy" id="9606"/>
    <lineage>
        <taxon>Eukaryota</taxon>
        <taxon>Metazoa</taxon>
        <taxon>Chordata</taxon>
        <taxon>Craniata</taxon>
        <taxon>Vertebrata</taxon>
        <taxon>Euteleostomi</taxon>
        <taxon>Mammalia</taxon>
        <taxon>Eutheria</taxon>
        <taxon>Euarchontoglires</taxon>
        <taxon>Primates</taxon>
        <taxon>Haplorrhini</taxon>
        <taxon>Catarrhini</taxon>
        <taxon>Hominidae</taxon>
        <taxon>Homo</taxon>
    </lineage>
</organism>
<reference key="1">
    <citation type="journal article" date="2004" name="Genome Res.">
        <title>The status, quality, and expansion of the NIH full-length cDNA project: the Mammalian Gene Collection (MGC).</title>
        <authorList>
            <consortium name="The MGC Project Team"/>
        </authorList>
    </citation>
    <scope>NUCLEOTIDE SEQUENCE [LARGE SCALE MRNA]</scope>
    <source>
        <tissue>Bone marrow</tissue>
        <tissue>Duodenum</tissue>
        <tissue>Lymph</tissue>
        <tissue>Skin</tissue>
    </source>
</reference>
<reference key="2">
    <citation type="submission" date="2007-03" db="UniProtKB">
        <authorList>
            <person name="Lubec G."/>
            <person name="Afjehi-Sadat L."/>
        </authorList>
    </citation>
    <scope>PROTEIN SEQUENCE OF 65-79 AND 244-280</scope>
    <scope>IDENTIFICATION BY MASS SPECTROMETRY</scope>
    <source>
        <tissue>Brain</tissue>
        <tissue>Cajal-Retzius cell</tissue>
    </source>
</reference>
<reference key="3">
    <citation type="journal article" date="2006" name="Cell">
        <title>Global, in vivo, and site-specific phosphorylation dynamics in signaling networks.</title>
        <authorList>
            <person name="Olsen J.V."/>
            <person name="Blagoev B."/>
            <person name="Gnad F."/>
            <person name="Macek B."/>
            <person name="Kumar C."/>
            <person name="Mortensen P."/>
            <person name="Mann M."/>
        </authorList>
    </citation>
    <scope>PHOSPHORYLATION [LARGE SCALE ANALYSIS] AT SER-439</scope>
    <scope>IDENTIFICATION BY MASS SPECTROMETRY [LARGE SCALE ANALYSIS]</scope>
    <source>
        <tissue>Cervix carcinoma</tissue>
    </source>
</reference>
<reference key="4">
    <citation type="journal article" date="2008" name="Mol. Cell">
        <title>Kinase-selective enrichment enables quantitative phosphoproteomics of the kinome across the cell cycle.</title>
        <authorList>
            <person name="Daub H."/>
            <person name="Olsen J.V."/>
            <person name="Bairlein M."/>
            <person name="Gnad F."/>
            <person name="Oppermann F.S."/>
            <person name="Korner R."/>
            <person name="Greff Z."/>
            <person name="Keri G."/>
            <person name="Stemmann O."/>
            <person name="Mann M."/>
        </authorList>
    </citation>
    <scope>PHOSPHORYLATION [LARGE SCALE ANALYSIS] AT SER-439</scope>
    <scope>IDENTIFICATION BY MASS SPECTROMETRY [LARGE SCALE ANALYSIS]</scope>
    <source>
        <tissue>Cervix carcinoma</tissue>
    </source>
</reference>
<reference key="5">
    <citation type="journal article" date="2008" name="Proc. Natl. Acad. Sci. U.S.A.">
        <title>A quantitative atlas of mitotic phosphorylation.</title>
        <authorList>
            <person name="Dephoure N."/>
            <person name="Zhou C."/>
            <person name="Villen J."/>
            <person name="Beausoleil S.A."/>
            <person name="Bakalarski C.E."/>
            <person name="Elledge S.J."/>
            <person name="Gygi S.P."/>
        </authorList>
    </citation>
    <scope>PHOSPHORYLATION [LARGE SCALE ANALYSIS] AT SER-439</scope>
    <scope>IDENTIFICATION BY MASS SPECTROMETRY [LARGE SCALE ANALYSIS]</scope>
    <source>
        <tissue>Cervix carcinoma</tissue>
    </source>
</reference>
<reference key="6">
    <citation type="journal article" date="2009" name="Anal. Chem.">
        <title>Lys-N and trypsin cover complementary parts of the phosphoproteome in a refined SCX-based approach.</title>
        <authorList>
            <person name="Gauci S."/>
            <person name="Helbig A.O."/>
            <person name="Slijper M."/>
            <person name="Krijgsveld J."/>
            <person name="Heck A.J."/>
            <person name="Mohammed S."/>
        </authorList>
    </citation>
    <scope>IDENTIFICATION BY MASS SPECTROMETRY [LARGE SCALE ANALYSIS]</scope>
</reference>
<reference key="7">
    <citation type="journal article" date="2009" name="Cell">
        <title>Evolutionary divergence of enzymatic mechanisms for posttranslational polyglycylation.</title>
        <authorList>
            <person name="Rogowski K."/>
            <person name="Juge F."/>
            <person name="van Dijk J."/>
            <person name="Wloga D."/>
            <person name="Strub J.-M."/>
            <person name="Levilliers N."/>
            <person name="Thomas D."/>
            <person name="Bre M.-H."/>
            <person name="Van Dorsselaer A."/>
            <person name="Gaertig J."/>
            <person name="Janke C."/>
        </authorList>
    </citation>
    <scope>GLYCYLATION</scope>
</reference>
<reference key="8">
    <citation type="journal article" date="2009" name="Sci. Signal.">
        <title>Quantitative phosphoproteomic analysis of T cell receptor signaling reveals system-wide modulation of protein-protein interactions.</title>
        <authorList>
            <person name="Mayya V."/>
            <person name="Lundgren D.H."/>
            <person name="Hwang S.-I."/>
            <person name="Rezaul K."/>
            <person name="Wu L."/>
            <person name="Eng J.K."/>
            <person name="Rodionov V."/>
            <person name="Han D.K."/>
        </authorList>
    </citation>
    <scope>PHOSPHORYLATION [LARGE SCALE ANALYSIS] AT TYR-432 AND SER-439</scope>
    <scope>IDENTIFICATION BY MASS SPECTROMETRY [LARGE SCALE ANALYSIS]</scope>
    <source>
        <tissue>Leukemic T-cell</tissue>
    </source>
</reference>
<reference key="9">
    <citation type="journal article" date="2010" name="Sci. Signal.">
        <title>Quantitative phosphoproteomics reveals widespread full phosphorylation site occupancy during mitosis.</title>
        <authorList>
            <person name="Olsen J.V."/>
            <person name="Vermeulen M."/>
            <person name="Santamaria A."/>
            <person name="Kumar C."/>
            <person name="Miller M.L."/>
            <person name="Jensen L.J."/>
            <person name="Gnad F."/>
            <person name="Cox J."/>
            <person name="Jensen T.S."/>
            <person name="Nigg E.A."/>
            <person name="Brunak S."/>
            <person name="Mann M."/>
        </authorList>
    </citation>
    <scope>PHOSPHORYLATION [LARGE SCALE ANALYSIS] AT SER-439</scope>
    <scope>IDENTIFICATION BY MASS SPECTROMETRY [LARGE SCALE ANALYSIS]</scope>
    <source>
        <tissue>Cervix carcinoma</tissue>
    </source>
</reference>
<reference key="10">
    <citation type="journal article" date="2011" name="BMC Syst. Biol.">
        <title>Initial characterization of the human central proteome.</title>
        <authorList>
            <person name="Burkard T.R."/>
            <person name="Planyavsky M."/>
            <person name="Kaupe I."/>
            <person name="Breitwieser F.P."/>
            <person name="Buerckstuemmer T."/>
            <person name="Bennett K.L."/>
            <person name="Superti-Furga G."/>
            <person name="Colinge J."/>
        </authorList>
    </citation>
    <scope>IDENTIFICATION BY MASS SPECTROMETRY [LARGE SCALE ANALYSIS]</scope>
</reference>
<reference key="11">
    <citation type="journal article" date="2011" name="Sci. Signal.">
        <title>System-wide temporal characterization of the proteome and phosphoproteome of human embryonic stem cell differentiation.</title>
        <authorList>
            <person name="Rigbolt K.T."/>
            <person name="Prokhorova T.A."/>
            <person name="Akimov V."/>
            <person name="Henningsen J."/>
            <person name="Johansen P.T."/>
            <person name="Kratchmarova I."/>
            <person name="Kassem M."/>
            <person name="Mann M."/>
            <person name="Olsen J.V."/>
            <person name="Blagoev B."/>
        </authorList>
    </citation>
    <scope>PHOSPHORYLATION [LARGE SCALE ANALYSIS] AT SER-439</scope>
    <scope>IDENTIFICATION BY MASS SPECTROMETRY [LARGE SCALE ANALYSIS]</scope>
</reference>
<reference key="12">
    <citation type="journal article" date="2014" name="Cell">
        <title>Molecular basis for age-dependent microtubule acetylation by tubulin acetyltransferase.</title>
        <authorList>
            <person name="Szyk A."/>
            <person name="Deaconescu A.M."/>
            <person name="Spector J."/>
            <person name="Goodman B."/>
            <person name="Valenstein M.L."/>
            <person name="Ziolkowska N.E."/>
            <person name="Kormendi V."/>
            <person name="Grigorieff N."/>
            <person name="Roll-Mecak A."/>
        </authorList>
    </citation>
    <scope>ACETYLATION AT LYS-40</scope>
</reference>
<reference key="13">
    <citation type="journal article" date="2014" name="J. Proteomics">
        <title>An enzyme assisted RP-RPLC approach for in-depth analysis of human liver phosphoproteome.</title>
        <authorList>
            <person name="Bian Y."/>
            <person name="Song C."/>
            <person name="Cheng K."/>
            <person name="Dong M."/>
            <person name="Wang F."/>
            <person name="Huang J."/>
            <person name="Sun D."/>
            <person name="Wang L."/>
            <person name="Ye M."/>
            <person name="Zou H."/>
        </authorList>
    </citation>
    <scope>IDENTIFICATION BY MASS SPECTROMETRY [LARGE SCALE ANALYSIS]</scope>
    <source>
        <tissue>Liver</tissue>
    </source>
</reference>
<reference key="14">
    <citation type="journal article" date="2015" name="Science">
        <title>Mitosis. Microtubule detyrosination guides chromosomes during mitosis.</title>
        <authorList>
            <person name="Barisic M."/>
            <person name="Silva e Sousa R."/>
            <person name="Tripathy S.K."/>
            <person name="Magiera M.M."/>
            <person name="Zaytsev A.V."/>
            <person name="Pereira A.L."/>
            <person name="Janke C."/>
            <person name="Grishchuk E.L."/>
            <person name="Maiato H."/>
        </authorList>
    </citation>
    <scope>DETYROSINATION</scope>
</reference>
<reference key="15">
    <citation type="journal article" date="2016" name="Cell">
        <title>Graded control of microtubule severing by tubulin glutamylation.</title>
        <authorList>
            <person name="Valenstein M.L."/>
            <person name="Roll-Mecak A."/>
        </authorList>
    </citation>
    <scope>GLUTAMYLATION</scope>
</reference>
<reference key="16">
    <citation type="journal article" date="2016" name="Cell Rep.">
        <title>Alpha-tubulin tyrosination and CLIP-170 phosphorylation regulate the initiation of dynein-driven transport in neurons.</title>
        <authorList>
            <person name="Nirschl J.J."/>
            <person name="Magiera M.M."/>
            <person name="Lazarus J.E."/>
            <person name="Janke C."/>
            <person name="Holzbaur E.L."/>
        </authorList>
    </citation>
    <scope>TYROSINATION</scope>
</reference>
<reference key="17">
    <citation type="journal article" date="2017" name="Science">
        <title>Vasohibins encode tubulin detyrosinating activity.</title>
        <authorList>
            <person name="Nieuwenhuis J."/>
            <person name="Adamopoulos A."/>
            <person name="Bleijerveld O.B."/>
            <person name="Mazouzi A."/>
            <person name="Stickel E."/>
            <person name="Celie P."/>
            <person name="Altelaar M."/>
            <person name="Knipscheer P."/>
            <person name="Perrakis A."/>
            <person name="Blomen V.A."/>
            <person name="Brummelkamp T.R."/>
        </authorList>
    </citation>
    <scope>DETYROSINATION</scope>
</reference>
<reference key="18">
    <citation type="journal article" date="2022" name="Science">
        <title>Posttranslational modification of microtubules by the MATCAP detyrosinase.</title>
        <authorList>
            <person name="Landskron L."/>
            <person name="Bak J."/>
            <person name="Adamopoulos A."/>
            <person name="Kaplani K."/>
            <person name="Moraiti M."/>
            <person name="van den Hengel L.G."/>
            <person name="Song J.Y."/>
            <person name="Bleijerveld O.B."/>
            <person name="Nieuwenhuis J."/>
            <person name="Heidebrecht T."/>
            <person name="Henneman L."/>
            <person name="Moutin M.J."/>
            <person name="Barisic M."/>
            <person name="Taraviras S."/>
            <person name="Perrakis A."/>
            <person name="Brummelkamp T.R."/>
        </authorList>
    </citation>
    <scope>DETYROSINATION</scope>
</reference>
<proteinExistence type="evidence at protein level"/>
<protein>
    <recommendedName>
        <fullName>Tubulin alpha-1C chain</fullName>
        <ecNumber evidence="2">3.6.5.-</ecNumber>
    </recommendedName>
    <alternativeName>
        <fullName>Alpha-tubulin 6</fullName>
    </alternativeName>
    <alternativeName>
        <fullName>Tubulin alpha-6 chain</fullName>
    </alternativeName>
    <component>
        <recommendedName>
            <fullName>Detyrosinated tubulin alpha-1C chain</fullName>
        </recommendedName>
    </component>
</protein>
<feature type="chain" id="PRO_0000048112" description="Tubulin alpha-1C chain">
    <location>
        <begin position="1"/>
        <end position="449"/>
    </location>
</feature>
<feature type="chain" id="PRO_0000437394" description="Detyrosinated tubulin alpha-1C chain" evidence="16 17">
    <location>
        <begin position="1"/>
        <end position="448"/>
    </location>
</feature>
<feature type="region of interest" description="Disordered" evidence="7">
    <location>
        <begin position="429"/>
        <end position="449"/>
    </location>
</feature>
<feature type="short sequence motif" description="MREC motif" evidence="2">
    <location>
        <begin position="1"/>
        <end position="4"/>
    </location>
</feature>
<feature type="compositionally biased region" description="Acidic residues" evidence="7">
    <location>
        <begin position="431"/>
        <end position="449"/>
    </location>
</feature>
<feature type="active site" evidence="2">
    <location>
        <position position="254"/>
    </location>
</feature>
<feature type="binding site" evidence="2">
    <location>
        <position position="11"/>
    </location>
    <ligand>
        <name>GTP</name>
        <dbReference type="ChEBI" id="CHEBI:37565"/>
    </ligand>
</feature>
<feature type="binding site" evidence="2">
    <location>
        <position position="71"/>
    </location>
    <ligand>
        <name>GTP</name>
        <dbReference type="ChEBI" id="CHEBI:37565"/>
    </ligand>
</feature>
<feature type="binding site" evidence="2">
    <location>
        <position position="71"/>
    </location>
    <ligand>
        <name>Mg(2+)</name>
        <dbReference type="ChEBI" id="CHEBI:18420"/>
    </ligand>
</feature>
<feature type="binding site" evidence="2">
    <location>
        <position position="140"/>
    </location>
    <ligand>
        <name>GTP</name>
        <dbReference type="ChEBI" id="CHEBI:37565"/>
    </ligand>
</feature>
<feature type="binding site" evidence="2">
    <location>
        <position position="144"/>
    </location>
    <ligand>
        <name>GTP</name>
        <dbReference type="ChEBI" id="CHEBI:37565"/>
    </ligand>
</feature>
<feature type="binding site" evidence="2">
    <location>
        <position position="145"/>
    </location>
    <ligand>
        <name>GTP</name>
        <dbReference type="ChEBI" id="CHEBI:37565"/>
    </ligand>
</feature>
<feature type="binding site" evidence="2">
    <location>
        <position position="179"/>
    </location>
    <ligand>
        <name>GTP</name>
        <dbReference type="ChEBI" id="CHEBI:37565"/>
    </ligand>
</feature>
<feature type="binding site" evidence="2">
    <location>
        <position position="206"/>
    </location>
    <ligand>
        <name>GTP</name>
        <dbReference type="ChEBI" id="CHEBI:37565"/>
    </ligand>
</feature>
<feature type="binding site" evidence="2">
    <location>
        <position position="228"/>
    </location>
    <ligand>
        <name>GTP</name>
        <dbReference type="ChEBI" id="CHEBI:37565"/>
    </ligand>
</feature>
<feature type="site" description="Involved in polymerization">
    <location>
        <position position="449"/>
    </location>
</feature>
<feature type="modified residue" description="N6-acetyllysine" evidence="8">
    <location>
        <position position="40"/>
    </location>
</feature>
<feature type="modified residue" description="3'-nitrotyrosine" evidence="4">
    <location>
        <position position="282"/>
    </location>
</feature>
<feature type="modified residue" description="Phosphotyrosine" evidence="21">
    <location>
        <position position="432"/>
    </location>
</feature>
<feature type="modified residue" description="Phosphoserine" evidence="18 19 20 21 22 23">
    <location>
        <position position="439"/>
    </location>
</feature>
<feature type="modified residue" description="3'-nitrotyrosine" evidence="6">
    <location>
        <position position="449"/>
    </location>
</feature>
<sequence length="449" mass="49895">MRECISIHVGQAGVQIGNACWELYCLEHGIQPDGQMPSDKTIGGGDDSFNTFFSETGAGKHVPRAVFVDLEPTVIDEVRTGTYRQLFHPEQLITGKEDAANNYARGHYTIGKEIIDLVLDRIRKLADQCTGLQGFLVFHSFGGGTGSGFTSLLMERLSVDYGKKSKLEFSIYPAPQVSTAVVEPYNSILTTHTTLEHSDCAFMVDNEAIYDICRRNLDIERPTYTNLNRLISQIVSSITASLRFDGALNVDLTEFQTNLVPYPRIHFPLATYAPVISAEKAYHEQLTVAEITNACFEPANQMVKCDPRHGKYMACCLLYRGDVVPKDVNAAIATIKTKRTIQFVDWCPTGFKVGINYQPPTVVPGGDLAKVQRAVCMLSNTTAVAEAWARLDHKFDLMYAKRAFVHWYVGEGMEEGEFSEAREDMAALEKDYEEVGADSADGEDEGEEY</sequence>
<keyword id="KW-0007">Acetylation</keyword>
<keyword id="KW-0963">Cytoplasm</keyword>
<keyword id="KW-0206">Cytoskeleton</keyword>
<keyword id="KW-0903">Direct protein sequencing</keyword>
<keyword id="KW-0342">GTP-binding</keyword>
<keyword id="KW-0378">Hydrolase</keyword>
<keyword id="KW-0460">Magnesium</keyword>
<keyword id="KW-0479">Metal-binding</keyword>
<keyword id="KW-0488">Methylation</keyword>
<keyword id="KW-0493">Microtubule</keyword>
<keyword id="KW-0944">Nitration</keyword>
<keyword id="KW-0547">Nucleotide-binding</keyword>
<keyword id="KW-0597">Phosphoprotein</keyword>
<keyword id="KW-1267">Proteomics identification</keyword>
<keyword id="KW-1185">Reference proteome</keyword>